<evidence type="ECO:0000255" key="1">
    <source>
        <dbReference type="HAMAP-Rule" id="MF_00013"/>
    </source>
</evidence>
<evidence type="ECO:0000255" key="2">
    <source>
        <dbReference type="PROSITE-ProRule" id="PRU01067"/>
    </source>
</evidence>
<accession>Q8A8S8</accession>
<feature type="chain" id="PRO_0000062810" description="Octanoyltransferase">
    <location>
        <begin position="1"/>
        <end position="227"/>
    </location>
</feature>
<feature type="domain" description="BPL/LPL catalytic" evidence="2">
    <location>
        <begin position="35"/>
        <end position="222"/>
    </location>
</feature>
<feature type="active site" description="Acyl-thioester intermediate" evidence="1">
    <location>
        <position position="183"/>
    </location>
</feature>
<feature type="binding site" evidence="1">
    <location>
        <begin position="80"/>
        <end position="87"/>
    </location>
    <ligand>
        <name>substrate</name>
    </ligand>
</feature>
<feature type="binding site" evidence="1">
    <location>
        <begin position="152"/>
        <end position="154"/>
    </location>
    <ligand>
        <name>substrate</name>
    </ligand>
</feature>
<feature type="binding site" evidence="1">
    <location>
        <begin position="165"/>
        <end position="167"/>
    </location>
    <ligand>
        <name>substrate</name>
    </ligand>
</feature>
<feature type="site" description="Lowers pKa of active site Cys" evidence="1">
    <location>
        <position position="149"/>
    </location>
</feature>
<dbReference type="EC" id="2.3.1.181" evidence="1"/>
<dbReference type="EMBL" id="AE015928">
    <property type="protein sequence ID" value="AAO76196.1"/>
    <property type="molecule type" value="Genomic_DNA"/>
</dbReference>
<dbReference type="RefSeq" id="NP_810002.1">
    <property type="nucleotide sequence ID" value="NC_004663.1"/>
</dbReference>
<dbReference type="RefSeq" id="WP_008765857.1">
    <property type="nucleotide sequence ID" value="NC_004663.1"/>
</dbReference>
<dbReference type="SMR" id="Q8A8S8"/>
<dbReference type="FunCoup" id="Q8A8S8">
    <property type="interactions" value="319"/>
</dbReference>
<dbReference type="STRING" id="226186.BT_1089"/>
<dbReference type="PaxDb" id="226186-BT_1089"/>
<dbReference type="EnsemblBacteria" id="AAO76196">
    <property type="protein sequence ID" value="AAO76196"/>
    <property type="gene ID" value="BT_1089"/>
</dbReference>
<dbReference type="GeneID" id="60927065"/>
<dbReference type="KEGG" id="bth:BT_1089"/>
<dbReference type="PATRIC" id="fig|226186.12.peg.1108"/>
<dbReference type="eggNOG" id="COG0321">
    <property type="taxonomic scope" value="Bacteria"/>
</dbReference>
<dbReference type="HOGENOM" id="CLU_035168_1_3_10"/>
<dbReference type="InParanoid" id="Q8A8S8"/>
<dbReference type="OrthoDB" id="9787061at2"/>
<dbReference type="UniPathway" id="UPA00538">
    <property type="reaction ID" value="UER00592"/>
</dbReference>
<dbReference type="Proteomes" id="UP000001414">
    <property type="component" value="Chromosome"/>
</dbReference>
<dbReference type="GO" id="GO:0005737">
    <property type="term" value="C:cytoplasm"/>
    <property type="evidence" value="ECO:0007669"/>
    <property type="project" value="UniProtKB-SubCell"/>
</dbReference>
<dbReference type="GO" id="GO:0033819">
    <property type="term" value="F:lipoyl(octanoyl) transferase activity"/>
    <property type="evidence" value="ECO:0000318"/>
    <property type="project" value="GO_Central"/>
</dbReference>
<dbReference type="GO" id="GO:0036211">
    <property type="term" value="P:protein modification process"/>
    <property type="evidence" value="ECO:0007669"/>
    <property type="project" value="InterPro"/>
</dbReference>
<dbReference type="CDD" id="cd16444">
    <property type="entry name" value="LipB"/>
    <property type="match status" value="1"/>
</dbReference>
<dbReference type="FunFam" id="3.30.930.10:FF:000035">
    <property type="entry name" value="Putative lipoyltransferase 2, mitochondrial"/>
    <property type="match status" value="1"/>
</dbReference>
<dbReference type="Gene3D" id="3.30.930.10">
    <property type="entry name" value="Bira Bifunctional Protein, Domain 2"/>
    <property type="match status" value="1"/>
</dbReference>
<dbReference type="HAMAP" id="MF_00013">
    <property type="entry name" value="LipB"/>
    <property type="match status" value="1"/>
</dbReference>
<dbReference type="InterPro" id="IPR045864">
    <property type="entry name" value="aa-tRNA-synth_II/BPL/LPL"/>
</dbReference>
<dbReference type="InterPro" id="IPR004143">
    <property type="entry name" value="BPL_LPL_catalytic"/>
</dbReference>
<dbReference type="InterPro" id="IPR000544">
    <property type="entry name" value="Octanoyltransferase"/>
</dbReference>
<dbReference type="InterPro" id="IPR020605">
    <property type="entry name" value="Octanoyltransferase_CS"/>
</dbReference>
<dbReference type="NCBIfam" id="TIGR00214">
    <property type="entry name" value="lipB"/>
    <property type="match status" value="1"/>
</dbReference>
<dbReference type="NCBIfam" id="NF010925">
    <property type="entry name" value="PRK14345.1"/>
    <property type="match status" value="1"/>
</dbReference>
<dbReference type="PANTHER" id="PTHR10993">
    <property type="entry name" value="OCTANOYLTRANSFERASE"/>
    <property type="match status" value="1"/>
</dbReference>
<dbReference type="PANTHER" id="PTHR10993:SF12">
    <property type="entry name" value="OCTANOYLTRANSFERASE"/>
    <property type="match status" value="1"/>
</dbReference>
<dbReference type="Pfam" id="PF21948">
    <property type="entry name" value="LplA-B_cat"/>
    <property type="match status" value="1"/>
</dbReference>
<dbReference type="PIRSF" id="PIRSF016262">
    <property type="entry name" value="LPLase"/>
    <property type="match status" value="1"/>
</dbReference>
<dbReference type="SUPFAM" id="SSF55681">
    <property type="entry name" value="Class II aaRS and biotin synthetases"/>
    <property type="match status" value="1"/>
</dbReference>
<dbReference type="PROSITE" id="PS51733">
    <property type="entry name" value="BPL_LPL_CATALYTIC"/>
    <property type="match status" value="1"/>
</dbReference>
<dbReference type="PROSITE" id="PS01313">
    <property type="entry name" value="LIPB"/>
    <property type="match status" value="1"/>
</dbReference>
<comment type="function">
    <text evidence="1">Catalyzes the transfer of endogenously produced octanoic acid from octanoyl-acyl-carrier-protein onto the lipoyl domains of lipoate-dependent enzymes. Lipoyl-ACP can also act as a substrate although octanoyl-ACP is likely to be the physiological substrate.</text>
</comment>
<comment type="catalytic activity">
    <reaction evidence="1">
        <text>octanoyl-[ACP] + L-lysyl-[protein] = N(6)-octanoyl-L-lysyl-[protein] + holo-[ACP] + H(+)</text>
        <dbReference type="Rhea" id="RHEA:17665"/>
        <dbReference type="Rhea" id="RHEA-COMP:9636"/>
        <dbReference type="Rhea" id="RHEA-COMP:9685"/>
        <dbReference type="Rhea" id="RHEA-COMP:9752"/>
        <dbReference type="Rhea" id="RHEA-COMP:9928"/>
        <dbReference type="ChEBI" id="CHEBI:15378"/>
        <dbReference type="ChEBI" id="CHEBI:29969"/>
        <dbReference type="ChEBI" id="CHEBI:64479"/>
        <dbReference type="ChEBI" id="CHEBI:78463"/>
        <dbReference type="ChEBI" id="CHEBI:78809"/>
        <dbReference type="EC" id="2.3.1.181"/>
    </reaction>
</comment>
<comment type="pathway">
    <text evidence="1">Protein modification; protein lipoylation via endogenous pathway; protein N(6)-(lipoyl)lysine from octanoyl-[acyl-carrier-protein]: step 1/2.</text>
</comment>
<comment type="subcellular location">
    <subcellularLocation>
        <location evidence="1">Cytoplasm</location>
    </subcellularLocation>
</comment>
<comment type="miscellaneous">
    <text evidence="1">In the reaction, the free carboxyl group of octanoic acid is attached via an amide linkage to the epsilon-amino group of a specific lysine residue of lipoyl domains of lipoate-dependent enzymes.</text>
</comment>
<comment type="similarity">
    <text evidence="1">Belongs to the LipB family.</text>
</comment>
<reference key="1">
    <citation type="journal article" date="2003" name="Science">
        <title>A genomic view of the human-Bacteroides thetaiotaomicron symbiosis.</title>
        <authorList>
            <person name="Xu J."/>
            <person name="Bjursell M.K."/>
            <person name="Himrod J."/>
            <person name="Deng S."/>
            <person name="Carmichael L.K."/>
            <person name="Chiang H.C."/>
            <person name="Hooper L.V."/>
            <person name="Gordon J.I."/>
        </authorList>
    </citation>
    <scope>NUCLEOTIDE SEQUENCE [LARGE SCALE GENOMIC DNA]</scope>
    <source>
        <strain>ATCC 29148 / DSM 2079 / JCM 5827 / CCUG 10774 / NCTC 10582 / VPI-5482 / E50</strain>
    </source>
</reference>
<name>LIPB_BACTN</name>
<organism>
    <name type="scientific">Bacteroides thetaiotaomicron (strain ATCC 29148 / DSM 2079 / JCM 5827 / CCUG 10774 / NCTC 10582 / VPI-5482 / E50)</name>
    <dbReference type="NCBI Taxonomy" id="226186"/>
    <lineage>
        <taxon>Bacteria</taxon>
        <taxon>Pseudomonadati</taxon>
        <taxon>Bacteroidota</taxon>
        <taxon>Bacteroidia</taxon>
        <taxon>Bacteroidales</taxon>
        <taxon>Bacteroidaceae</taxon>
        <taxon>Bacteroides</taxon>
    </lineage>
</organism>
<protein>
    <recommendedName>
        <fullName evidence="1">Octanoyltransferase</fullName>
        <ecNumber evidence="1">2.3.1.181</ecNumber>
    </recommendedName>
    <alternativeName>
        <fullName evidence="1">Lipoate-protein ligase B</fullName>
    </alternativeName>
    <alternativeName>
        <fullName evidence="1">Lipoyl/octanoyl transferase</fullName>
    </alternativeName>
    <alternativeName>
        <fullName evidence="1">Octanoyl-[acyl-carrier-protein]-protein N-octanoyltransferase</fullName>
    </alternativeName>
</protein>
<proteinExistence type="inferred from homology"/>
<gene>
    <name evidence="1" type="primary">lipB</name>
    <name type="ordered locus">BT_1089</name>
</gene>
<keyword id="KW-0012">Acyltransferase</keyword>
<keyword id="KW-0963">Cytoplasm</keyword>
<keyword id="KW-1185">Reference proteome</keyword>
<keyword id="KW-0808">Transferase</keyword>
<sequence>MKTVLVDWNLIPYAEAWQRQTEWFDTLVRAKAQGEAYENRIIMCEHPHVYTLGRSGKENNMLLNDDQLKAIQATLFHIDRGGDITYHGPGQLVCYPILNLEEFHLGLKEYVHLLEEAVIRVCASYGIEAGRLEKATGVWLEGSTPRARKICAIGVRSSHYVTMHGLALNVNTDLRYFSYIHPCGFIDKGVTSLRQELKHEVPMDEVKQRLECELGRLLNEKKQQIAQ</sequence>